<proteinExistence type="evidence at transcript level"/>
<reference key="1">
    <citation type="submission" date="2002-06" db="EMBL/GenBank/DDBJ databases">
        <title>Molecular cloning and characterization of rabbit organic anion transporter 3.</title>
        <authorList>
            <person name="Bahn A."/>
            <person name="Roediger M."/>
            <person name="Lorenz H."/>
            <person name="Hagos Y."/>
            <person name="Burckhardt G."/>
        </authorList>
    </citation>
    <scope>NUCLEOTIDE SEQUENCE [MRNA]</scope>
    <source>
        <tissue>Kidney</tissue>
    </source>
</reference>
<reference key="2">
    <citation type="submission" date="2002-07" db="EMBL/GenBank/DDBJ databases">
        <title>Molecular cloning of rabbit organic anion transporter rabbit OAT3 and functional comparisons with rabbit OAT1.</title>
        <authorList>
            <person name="Zhang X."/>
            <person name="Wright S.H."/>
        </authorList>
    </citation>
    <scope>NUCLEOTIDE SEQUENCE [MRNA]</scope>
</reference>
<gene>
    <name type="primary">SLC22A8</name>
    <name type="synonym">OAT3</name>
</gene>
<evidence type="ECO:0000250" key="1"/>
<evidence type="ECO:0000250" key="2">
    <source>
        <dbReference type="UniProtKB" id="O88909"/>
    </source>
</evidence>
<evidence type="ECO:0000250" key="3">
    <source>
        <dbReference type="UniProtKB" id="Q8TCC7"/>
    </source>
</evidence>
<evidence type="ECO:0000250" key="4">
    <source>
        <dbReference type="UniProtKB" id="Q9R1U7"/>
    </source>
</evidence>
<evidence type="ECO:0000255" key="5"/>
<evidence type="ECO:0000256" key="6">
    <source>
        <dbReference type="SAM" id="MobiDB-lite"/>
    </source>
</evidence>
<evidence type="ECO:0000305" key="7"/>
<dbReference type="EMBL" id="AJ489526">
    <property type="protein sequence ID" value="CAD34035.1"/>
    <property type="molecule type" value="mRNA"/>
</dbReference>
<dbReference type="EMBL" id="AF533644">
    <property type="protein sequence ID" value="AAQ10307.1"/>
    <property type="molecule type" value="mRNA"/>
</dbReference>
<dbReference type="RefSeq" id="NP_001075590.1">
    <property type="nucleotide sequence ID" value="NM_001082121.2"/>
</dbReference>
<dbReference type="RefSeq" id="XP_008272547.1">
    <property type="nucleotide sequence ID" value="XM_008274325.2"/>
</dbReference>
<dbReference type="SMR" id="Q8HY24"/>
<dbReference type="FunCoup" id="Q8HY24">
    <property type="interactions" value="13"/>
</dbReference>
<dbReference type="GlyCosmos" id="Q8HY24">
    <property type="glycosylation" value="1 site, No reported glycans"/>
</dbReference>
<dbReference type="PaxDb" id="9986-ENSOCUP00000022206"/>
<dbReference type="Ensembl" id="ENSOCUT00000023266.3">
    <property type="protein sequence ID" value="ENSOCUP00000022206.1"/>
    <property type="gene ID" value="ENSOCUG00000024091.3"/>
</dbReference>
<dbReference type="GeneID" id="100008845"/>
<dbReference type="KEGG" id="ocu:100008845"/>
<dbReference type="CTD" id="9376"/>
<dbReference type="eggNOG" id="KOG0255">
    <property type="taxonomic scope" value="Eukaryota"/>
</dbReference>
<dbReference type="GeneTree" id="ENSGT00940000157004"/>
<dbReference type="HOGENOM" id="CLU_001265_33_3_1"/>
<dbReference type="InParanoid" id="Q8HY24"/>
<dbReference type="OMA" id="CGGLMPN"/>
<dbReference type="OrthoDB" id="2544694at2759"/>
<dbReference type="TreeFam" id="TF315847"/>
<dbReference type="Proteomes" id="UP000001811">
    <property type="component" value="Unplaced"/>
</dbReference>
<dbReference type="Bgee" id="ENSOCUG00000024091">
    <property type="expression patterns" value="Expressed in kidney and 15 other cell types or tissues"/>
</dbReference>
<dbReference type="GO" id="GO:0016323">
    <property type="term" value="C:basolateral plasma membrane"/>
    <property type="evidence" value="ECO:0007669"/>
    <property type="project" value="UniProtKB-SubCell"/>
</dbReference>
<dbReference type="GO" id="GO:0015297">
    <property type="term" value="F:antiporter activity"/>
    <property type="evidence" value="ECO:0000250"/>
    <property type="project" value="UniProtKB"/>
</dbReference>
<dbReference type="GO" id="GO:0008514">
    <property type="term" value="F:organic anion transmembrane transporter activity"/>
    <property type="evidence" value="ECO:0000250"/>
    <property type="project" value="UniProtKB"/>
</dbReference>
<dbReference type="GO" id="GO:0042910">
    <property type="term" value="F:xenobiotic transmembrane transporter activity"/>
    <property type="evidence" value="ECO:0000250"/>
    <property type="project" value="UniProtKB"/>
</dbReference>
<dbReference type="GO" id="GO:0006811">
    <property type="term" value="P:monoatomic ion transport"/>
    <property type="evidence" value="ECO:0007669"/>
    <property type="project" value="UniProtKB-KW"/>
</dbReference>
<dbReference type="GO" id="GO:0015732">
    <property type="term" value="P:prostaglandin transport"/>
    <property type="evidence" value="ECO:0000250"/>
    <property type="project" value="UniProtKB"/>
</dbReference>
<dbReference type="GO" id="GO:0009636">
    <property type="term" value="P:response to toxic substance"/>
    <property type="evidence" value="ECO:0007669"/>
    <property type="project" value="UniProtKB-KW"/>
</dbReference>
<dbReference type="FunFam" id="1.20.1250.20:FF:000023">
    <property type="entry name" value="Solute carrier family 22 member 6"/>
    <property type="match status" value="1"/>
</dbReference>
<dbReference type="Gene3D" id="1.20.1250.20">
    <property type="entry name" value="MFS general substrate transporter like domains"/>
    <property type="match status" value="1"/>
</dbReference>
<dbReference type="InterPro" id="IPR020846">
    <property type="entry name" value="MFS_dom"/>
</dbReference>
<dbReference type="InterPro" id="IPR005828">
    <property type="entry name" value="MFS_sugar_transport-like"/>
</dbReference>
<dbReference type="InterPro" id="IPR036259">
    <property type="entry name" value="MFS_trans_sf"/>
</dbReference>
<dbReference type="InterPro" id="IPR004749">
    <property type="entry name" value="Orgcat_transp/SVOP"/>
</dbReference>
<dbReference type="NCBIfam" id="TIGR00898">
    <property type="entry name" value="2A0119"/>
    <property type="match status" value="1"/>
</dbReference>
<dbReference type="PANTHER" id="PTHR24064">
    <property type="entry name" value="SOLUTE CARRIER FAMILY 22 MEMBER"/>
    <property type="match status" value="1"/>
</dbReference>
<dbReference type="Pfam" id="PF00083">
    <property type="entry name" value="Sugar_tr"/>
    <property type="match status" value="1"/>
</dbReference>
<dbReference type="SUPFAM" id="SSF103473">
    <property type="entry name" value="MFS general substrate transporter"/>
    <property type="match status" value="1"/>
</dbReference>
<dbReference type="PROSITE" id="PS50850">
    <property type="entry name" value="MFS"/>
    <property type="match status" value="1"/>
</dbReference>
<comment type="function">
    <text evidence="2 3 4">Functions as an organic anion/dicarboxylate exchanger that couples organic anion uptake indirectly to the sodium gradient. Transports organic anions such as estrone 3-sulfate (E1S) and urate in exchange for dicarboxylates such as glutarate or ketoglutarate (2-oxoglutarate). Plays an important role in the excretion of endogenous and exogenous organic anions, especially from the kidney and the brain (By similarity). E1S transport is pH- and chloride-dependent and may also involve E1S/cGMP exchange (By similarity). Responsible for the transport of prostaglandin E2 (PGE2) and prostaglandin F2(alpha) (PGF2(alpha)) in the basolateral side of the renal tubule. Involved in the transport of neuroactive tryptophan metabolites kynurenate and xanthurenate. Functions as a biopterin transporters involved in the uptake and the secretion of coenzymes tetrahydrobiopterin (BH4), dihydrobiopterin (BH2) and sepiapterin to urine, thereby determining baseline levels of blood biopterins. May be involved in the basolateral transport of steviol, a metabolite of the popular sugar substitute stevioside. May participate in the detoxification/ renal excretion of drugs and xenobiotics, such as the histamine H(2)-receptor antagonists fexofenadine and cimetidine, the antibiotic benzylpenicillin (PCG), the anionic herbicide 2,4-dichloro-phenoxyacetate (2,4-D), the diagnostic agent p-aminohippurate (PAH), the antiviral acyclovir (ACV), and the mycotoxin ochratoxin (OTA), by transporting these exogenous organic anions across the cell membrane in exchange for dicarboxylates such as 2-oxoglutarate (By similarity). Contributes to the renal uptake of potent uremic toxins (indoxyl sulfate (IS), indole acetate (IA), hippurate/N-benzoylglycine (HA) and 3-carboxy-4-methyl-5-propyl-2-furanpropionate (CMPF)), pravastatin, PCG, E1S and dehydroepiandrosterone sulfate (DHEAS), and is partly involved in the renal uptake of temocaprilat (an angiotensin-converting enzyme (ACE) inhibitor) (By similarity). May contribute to the release of cortisol in the adrenals (By similarity). Involved in one of the detoxification systems on the choroid plexus (CP), removes substrates such as E1S or taurocholate (TC), PCG, 2,4-D and PAH, from the cerebrospinal fluid (CSF) to the blood for eventual excretion in urine and bile (By similarity). Also contributes to the uptake of several other organic compounds such as the prostanoids prostaglandin E(2) and prostaglandin F(2-alpha), L-carnitine, and the therapeutic drugs allopurinol, 6-mercaptopurine (6-MP) and 5-fluorouracil (5-FU) (By similarity). Mediates the transport of PAH, PCG, and the statins pravastatin and pitavastatin, from the cerebrum into the blood circulation across the blood-brain barrier (BBB). In summary, plays a role in the efflux of drugs and xenobiotics, helping reduce their undesired toxicological effects on the body (By similarity).</text>
</comment>
<comment type="catalytic activity">
    <reaction evidence="3">
        <text>estrone 3-sulfate(out) + glutarate(in) = estrone 3-sulfate(in) + glutarate(out)</text>
        <dbReference type="Rhea" id="RHEA:72151"/>
        <dbReference type="ChEBI" id="CHEBI:30921"/>
        <dbReference type="ChEBI" id="CHEBI:60050"/>
    </reaction>
</comment>
<comment type="catalytic activity">
    <reaction evidence="3">
        <text>estrone 3-sulfate(in) + 2-oxoglutarate(out) = estrone 3-sulfate(out) + 2-oxoglutarate(in)</text>
        <dbReference type="Rhea" id="RHEA:72399"/>
        <dbReference type="ChEBI" id="CHEBI:16810"/>
        <dbReference type="ChEBI" id="CHEBI:60050"/>
    </reaction>
</comment>
<comment type="catalytic activity">
    <reaction evidence="3">
        <text>glutarate(in) + 2-oxoglutarate(out) = glutarate(out) + 2-oxoglutarate(in)</text>
        <dbReference type="Rhea" id="RHEA:71751"/>
        <dbReference type="ChEBI" id="CHEBI:16810"/>
        <dbReference type="ChEBI" id="CHEBI:30921"/>
    </reaction>
</comment>
<comment type="catalytic activity">
    <reaction evidence="3">
        <text>urate(in) + 2-oxoglutarate(out) = urate(out) + 2-oxoglutarate(in)</text>
        <dbReference type="Rhea" id="RHEA:72403"/>
        <dbReference type="ChEBI" id="CHEBI:16810"/>
        <dbReference type="ChEBI" id="CHEBI:17775"/>
    </reaction>
</comment>
<comment type="catalytic activity">
    <reaction evidence="2">
        <text>taurocholate(out) + glutarate(in) = taurocholate(in) + glutarate(out)</text>
        <dbReference type="Rhea" id="RHEA:72159"/>
        <dbReference type="ChEBI" id="CHEBI:30921"/>
        <dbReference type="ChEBI" id="CHEBI:36257"/>
    </reaction>
</comment>
<comment type="catalytic activity">
    <reaction evidence="2">
        <text>dehydroepiandrosterone 3-sulfate(out) + glutarate(in) = dehydroepiandrosterone 3-sulfate(in) + glutarate(out)</text>
        <dbReference type="Rhea" id="RHEA:72355"/>
        <dbReference type="ChEBI" id="CHEBI:30921"/>
        <dbReference type="ChEBI" id="CHEBI:57905"/>
    </reaction>
</comment>
<comment type="catalytic activity">
    <reaction evidence="2">
        <text>prostaglandin F2alpha(out) + glutarate(in) = prostaglandin F2alpha(in) + glutarate(out)</text>
        <dbReference type="Rhea" id="RHEA:72503"/>
        <dbReference type="ChEBI" id="CHEBI:30921"/>
        <dbReference type="ChEBI" id="CHEBI:57404"/>
    </reaction>
</comment>
<comment type="catalytic activity">
    <reaction evidence="2">
        <text>prostaglandin F2alpha(out) + 2-oxoglutarate(in) = prostaglandin F2alpha(in) + 2-oxoglutarate(out)</text>
        <dbReference type="Rhea" id="RHEA:72507"/>
        <dbReference type="ChEBI" id="CHEBI:16810"/>
        <dbReference type="ChEBI" id="CHEBI:57404"/>
    </reaction>
</comment>
<comment type="catalytic activity">
    <reaction evidence="2">
        <text>(R)-carnitine(out) + 2-oxoglutarate(in) = (R)-carnitine(in) + 2-oxoglutarate(out)</text>
        <dbReference type="Rhea" id="RHEA:72511"/>
        <dbReference type="ChEBI" id="CHEBI:16347"/>
        <dbReference type="ChEBI" id="CHEBI:16810"/>
    </reaction>
</comment>
<comment type="catalytic activity">
    <reaction evidence="2">
        <text>glutarate(in) + (R)-carnitine(out) = glutarate(out) + (R)-carnitine(in)</text>
        <dbReference type="Rhea" id="RHEA:72515"/>
        <dbReference type="ChEBI" id="CHEBI:16347"/>
        <dbReference type="ChEBI" id="CHEBI:30921"/>
    </reaction>
</comment>
<comment type="catalytic activity">
    <reaction evidence="2">
        <text>prostaglandin E2(out) + 2-oxoglutarate(in) = prostaglandin E2(in) + 2-oxoglutarate(out)</text>
        <dbReference type="Rhea" id="RHEA:72499"/>
        <dbReference type="ChEBI" id="CHEBI:16810"/>
        <dbReference type="ChEBI" id="CHEBI:606564"/>
    </reaction>
</comment>
<comment type="catalytic activity">
    <reaction evidence="2">
        <text>prostaglandin E2(out) + glutarate(in) = prostaglandin E2(in) + glutarate(out)</text>
        <dbReference type="Rhea" id="RHEA:72495"/>
        <dbReference type="ChEBI" id="CHEBI:30921"/>
        <dbReference type="ChEBI" id="CHEBI:606564"/>
    </reaction>
</comment>
<comment type="catalytic activity">
    <reaction evidence="3">
        <text>urate(in) + glutarate(out) = urate(out) + glutarate(in)</text>
        <dbReference type="Rhea" id="RHEA:72551"/>
        <dbReference type="ChEBI" id="CHEBI:17775"/>
        <dbReference type="ChEBI" id="CHEBI:30921"/>
    </reaction>
</comment>
<comment type="catalytic activity">
    <reaction evidence="2">
        <text>taurocholate(out) + 2-oxoglutarate(in) = taurocholate(in) + 2-oxoglutarate(out)</text>
        <dbReference type="Rhea" id="RHEA:72547"/>
        <dbReference type="ChEBI" id="CHEBI:16810"/>
        <dbReference type="ChEBI" id="CHEBI:36257"/>
    </reaction>
</comment>
<comment type="catalytic activity">
    <reaction evidence="2">
        <text>dehydroepiandrosterone 3-sulfate(out) + 2-oxoglutarate(in) = dehydroepiandrosterone 3-sulfate(in) + 2-oxoglutarate(out)</text>
        <dbReference type="Rhea" id="RHEA:72543"/>
        <dbReference type="ChEBI" id="CHEBI:16810"/>
        <dbReference type="ChEBI" id="CHEBI:57905"/>
    </reaction>
</comment>
<comment type="catalytic activity">
    <reaction evidence="3">
        <text>kynurenate(out) + a dicarboxylate(in) = kynurenate(in) + a dicarboxylate(out)</text>
        <dbReference type="Rhea" id="RHEA:76087"/>
        <dbReference type="ChEBI" id="CHEBI:28965"/>
        <dbReference type="ChEBI" id="CHEBI:58454"/>
    </reaction>
</comment>
<comment type="catalytic activity">
    <reaction evidence="3">
        <text>(indol-3-yl)acetate(out) + a dicarboxylate(in) = (indol-3-yl)acetate(in) + a dicarboxylate(out)</text>
        <dbReference type="Rhea" id="RHEA:75983"/>
        <dbReference type="ChEBI" id="CHEBI:28965"/>
        <dbReference type="ChEBI" id="CHEBI:30854"/>
    </reaction>
</comment>
<comment type="catalytic activity">
    <reaction evidence="3">
        <text>indoxyl sulfate(out) + a dicarboxylate(in) = indoxyl sulfate(in) + a dicarboxylate(out)</text>
        <dbReference type="Rhea" id="RHEA:75987"/>
        <dbReference type="ChEBI" id="CHEBI:28965"/>
        <dbReference type="ChEBI" id="CHEBI:144643"/>
    </reaction>
</comment>
<comment type="catalytic activity">
    <reaction evidence="3">
        <text>N-benzoylglycine(out) + a dicarboxylate(in) = N-benzoylglycine(in) + a dicarboxylate(out)</text>
        <dbReference type="Rhea" id="RHEA:75991"/>
        <dbReference type="ChEBI" id="CHEBI:28965"/>
        <dbReference type="ChEBI" id="CHEBI:606565"/>
    </reaction>
</comment>
<comment type="catalytic activity">
    <reaction evidence="3">
        <text>3-carboxy-4-methyl-5-propyl-2-furanpropanoate(out) + a dicarboxylate(in) = 3-carboxy-4-methyl-5-propyl-2-furanpropanoate(in) + a dicarboxylate(out)</text>
        <dbReference type="Rhea" id="RHEA:75995"/>
        <dbReference type="ChEBI" id="CHEBI:28965"/>
        <dbReference type="ChEBI" id="CHEBI:194524"/>
    </reaction>
</comment>
<comment type="catalytic activity">
    <reaction evidence="3">
        <text>(6R)-L-erythro-5,6,7,8-tetrahydrobiopterin(out) + a dicarboxylate(in) = (6R)-L-erythro-5,6,7,8-tetrahydrobiopterin(in) + a dicarboxylate(out)</text>
        <dbReference type="Rhea" id="RHEA:76071"/>
        <dbReference type="ChEBI" id="CHEBI:28965"/>
        <dbReference type="ChEBI" id="CHEBI:59560"/>
    </reaction>
</comment>
<comment type="catalytic activity">
    <reaction evidence="3">
        <text>L-erythro-7,8-dihydrobiopterin(out) + a dicarboxylate(in) = L-erythro-7,8-dihydrobiopterin(in) + a dicarboxylate(out)</text>
        <dbReference type="Rhea" id="RHEA:76075"/>
        <dbReference type="ChEBI" id="CHEBI:28965"/>
        <dbReference type="ChEBI" id="CHEBI:43029"/>
    </reaction>
</comment>
<comment type="catalytic activity">
    <reaction evidence="3">
        <text>L-sepiapterin(out) + a dicarboxylate(in) = L-sepiapterin(in) + a dicarboxylate(out)</text>
        <dbReference type="Rhea" id="RHEA:76079"/>
        <dbReference type="ChEBI" id="CHEBI:28965"/>
        <dbReference type="ChEBI" id="CHEBI:194527"/>
    </reaction>
</comment>
<comment type="subcellular location">
    <subcellularLocation>
        <location evidence="7">Basolateral cell membrane</location>
        <topology evidence="7">Multi-pass membrane protein</topology>
    </subcellularLocation>
    <text evidence="1">Localizes on the brush border membrane of the choroid epithelial cells. Localizes to the basolateral membrane of the proximal tubular cells. Localizes on the abluminal and possibly, luminal membrane of the brain capillary endothelial cells (BCEC) (By similarity).</text>
</comment>
<comment type="similarity">
    <text evidence="7">Belongs to the major facilitator (TC 2.A.1) superfamily. Organic cation transporter (TC 2.A.1.19) family.</text>
</comment>
<protein>
    <recommendedName>
        <fullName>Organic anion transporter 3</fullName>
        <shortName>rOAT3</shortName>
    </recommendedName>
    <alternativeName>
        <fullName>Organic anion/dicarboxylate exchanger</fullName>
    </alternativeName>
    <alternativeName>
        <fullName>Solute carrier family 22 member 8</fullName>
    </alternativeName>
</protein>
<organism>
    <name type="scientific">Oryctolagus cuniculus</name>
    <name type="common">Rabbit</name>
    <dbReference type="NCBI Taxonomy" id="9986"/>
    <lineage>
        <taxon>Eukaryota</taxon>
        <taxon>Metazoa</taxon>
        <taxon>Chordata</taxon>
        <taxon>Craniata</taxon>
        <taxon>Vertebrata</taxon>
        <taxon>Euteleostomi</taxon>
        <taxon>Mammalia</taxon>
        <taxon>Eutheria</taxon>
        <taxon>Euarchontoglires</taxon>
        <taxon>Glires</taxon>
        <taxon>Lagomorpha</taxon>
        <taxon>Leporidae</taxon>
        <taxon>Oryctolagus</taxon>
    </lineage>
</organism>
<keyword id="KW-1003">Cell membrane</keyword>
<keyword id="KW-0216">Detoxification</keyword>
<keyword id="KW-0325">Glycoprotein</keyword>
<keyword id="KW-0406">Ion transport</keyword>
<keyword id="KW-0445">Lipid transport</keyword>
<keyword id="KW-0472">Membrane</keyword>
<keyword id="KW-0597">Phosphoprotein</keyword>
<keyword id="KW-1185">Reference proteome</keyword>
<keyword id="KW-0812">Transmembrane</keyword>
<keyword id="KW-1133">Transmembrane helix</keyword>
<keyword id="KW-0813">Transport</keyword>
<accession>Q8HY24</accession>
<sequence>MTFSEILDRVGSMGPFQFLHVALLGFPILGMANHNLLQIFTATTPSHHCRPPPNASAGPWVLPVNQNGQTERCLRFVHPPNASLPNDTQGATEPCLDGWVYNSTRDTIVTEWDLVCSSNKLKEMAQSIFMAGILIGGLVLGDLSDRFGRKPILTCCYLLLAASGSSTAFSPTLPIYMVFRFLCGFSISGISLSTVILNVEWVPTKMRAITSTAIGYCYTIGQFILPGLAYAIPQWRWLQLTVSVPYFIFSLLSWWIPESIRWLVLAGKSSKALKILRRVATFNGKKEEGEKLSLEELKLSLQKDISLAKAKYSTADLFRTPILRRVTLCLSLAWFATGFAYYSLAMGVEEFGVNIYILQIIFGGVDIPAKFITILSLSYLGRHITQGAALILAGAAILSLIFVPMDMSLLRTILAVFGKGCLSGSFSCLFLYTSELFPTVIRQTGMGISNVWARVGSMISPLVKITGEIQPFIPNIIYGTVALLGGSAALFLPETLNQPLPETLEDMENWFLQSKKLKQEPEAEKASQRIPLQPSGPGVDRS</sequence>
<name>S22A8_RABIT</name>
<feature type="chain" id="PRO_0000273444" description="Organic anion transporter 3">
    <location>
        <begin position="1"/>
        <end position="542"/>
    </location>
</feature>
<feature type="topological domain" description="Cytoplasmic" evidence="5">
    <location>
        <begin position="1"/>
        <end position="9"/>
    </location>
</feature>
<feature type="transmembrane region" description="Helical" evidence="5">
    <location>
        <begin position="10"/>
        <end position="30"/>
    </location>
</feature>
<feature type="topological domain" description="Extracellular" evidence="5">
    <location>
        <begin position="31"/>
        <end position="123"/>
    </location>
</feature>
<feature type="transmembrane region" description="Helical" evidence="5">
    <location>
        <begin position="124"/>
        <end position="144"/>
    </location>
</feature>
<feature type="topological domain" description="Cytoplasmic" evidence="5">
    <location>
        <begin position="145"/>
        <end position="150"/>
    </location>
</feature>
<feature type="transmembrane region" description="Helical" evidence="5">
    <location>
        <begin position="151"/>
        <end position="171"/>
    </location>
</feature>
<feature type="topological domain" description="Extracellular" evidence="5">
    <location>
        <begin position="172"/>
        <end position="176"/>
    </location>
</feature>
<feature type="transmembrane region" description="Helical" evidence="5">
    <location>
        <begin position="177"/>
        <end position="197"/>
    </location>
</feature>
<feature type="topological domain" description="Cytoplasmic" evidence="5">
    <location>
        <begin position="198"/>
        <end position="212"/>
    </location>
</feature>
<feature type="transmembrane region" description="Helical" evidence="5">
    <location>
        <begin position="213"/>
        <end position="233"/>
    </location>
</feature>
<feature type="topological domain" description="Extracellular" evidence="5">
    <location>
        <begin position="234"/>
        <end position="236"/>
    </location>
</feature>
<feature type="transmembrane region" description="Helical" evidence="5">
    <location>
        <begin position="237"/>
        <end position="257"/>
    </location>
</feature>
<feature type="topological domain" description="Cytoplasmic" evidence="5">
    <location>
        <begin position="258"/>
        <end position="327"/>
    </location>
</feature>
<feature type="transmembrane region" description="Helical" evidence="5">
    <location>
        <begin position="328"/>
        <end position="348"/>
    </location>
</feature>
<feature type="topological domain" description="Extracellular" evidence="5">
    <location>
        <begin position="349"/>
        <end position="354"/>
    </location>
</feature>
<feature type="transmembrane region" description="Helical" evidence="5">
    <location>
        <begin position="355"/>
        <end position="375"/>
    </location>
</feature>
<feature type="topological domain" description="Cytoplasmic" evidence="5">
    <location>
        <begin position="376"/>
        <end position="389"/>
    </location>
</feature>
<feature type="transmembrane region" description="Helical" evidence="5">
    <location>
        <begin position="390"/>
        <end position="410"/>
    </location>
</feature>
<feature type="topological domain" description="Extracellular" evidence="5">
    <location>
        <position position="411"/>
    </location>
</feature>
<feature type="transmembrane region" description="Helical" evidence="5">
    <location>
        <begin position="412"/>
        <end position="432"/>
    </location>
</feature>
<feature type="topological domain" description="Cytoplasmic" evidence="5">
    <location>
        <begin position="433"/>
        <end position="471"/>
    </location>
</feature>
<feature type="transmembrane region" description="Helical" evidence="5">
    <location>
        <begin position="472"/>
        <end position="492"/>
    </location>
</feature>
<feature type="topological domain" description="Extracellular" evidence="5">
    <location>
        <begin position="493"/>
        <end position="542"/>
    </location>
</feature>
<feature type="region of interest" description="Disordered" evidence="6">
    <location>
        <begin position="518"/>
        <end position="542"/>
    </location>
</feature>
<feature type="compositionally biased region" description="Basic and acidic residues" evidence="6">
    <location>
        <begin position="518"/>
        <end position="527"/>
    </location>
</feature>
<feature type="modified residue" description="Phosphoserine" evidence="4">
    <location>
        <position position="4"/>
    </location>
</feature>
<feature type="glycosylation site" description="N-linked (GlcNAc...) asparagine" evidence="5">
    <location>
        <position position="86"/>
    </location>
</feature>